<accession>A5VMY2</accession>
<keyword id="KW-0227">DNA damage</keyword>
<keyword id="KW-0233">DNA recombination</keyword>
<keyword id="KW-0234">DNA repair</keyword>
<keyword id="KW-0479">Metal-binding</keyword>
<keyword id="KW-0862">Zinc</keyword>
<keyword id="KW-0863">Zinc-finger</keyword>
<reference key="1">
    <citation type="journal article" date="2009" name="PLoS ONE">
        <title>Genome degradation in Brucella ovis corresponds with narrowing of its host range and tissue tropism.</title>
        <authorList>
            <person name="Tsolis R.M."/>
            <person name="Seshadri R."/>
            <person name="Santos R.L."/>
            <person name="Sangari F.J."/>
            <person name="Lobo J.M."/>
            <person name="de Jong M.F."/>
            <person name="Ren Q."/>
            <person name="Myers G."/>
            <person name="Brinkac L.M."/>
            <person name="Nelson W.C."/>
            <person name="Deboy R.T."/>
            <person name="Angiuoli S."/>
            <person name="Khouri H."/>
            <person name="Dimitrov G."/>
            <person name="Robinson J.R."/>
            <person name="Mulligan S."/>
            <person name="Walker R.L."/>
            <person name="Elzer P.E."/>
            <person name="Hassan K.A."/>
            <person name="Paulsen I.T."/>
        </authorList>
    </citation>
    <scope>NUCLEOTIDE SEQUENCE [LARGE SCALE GENOMIC DNA]</scope>
    <source>
        <strain>ATCC 25840 / 63/290 / NCTC 10512</strain>
    </source>
</reference>
<proteinExistence type="inferred from homology"/>
<feature type="chain" id="PRO_0000322866" description="Recombination protein RecR">
    <location>
        <begin position="1"/>
        <end position="201"/>
    </location>
</feature>
<feature type="domain" description="Toprim" evidence="1">
    <location>
        <begin position="83"/>
        <end position="178"/>
    </location>
</feature>
<feature type="zinc finger region" description="C4-type" evidence="1">
    <location>
        <begin position="60"/>
        <end position="75"/>
    </location>
</feature>
<dbReference type="EMBL" id="CP000708">
    <property type="protein sequence ID" value="ABQ61712.1"/>
    <property type="status" value="ALT_INIT"/>
    <property type="molecule type" value="Genomic_DNA"/>
</dbReference>
<dbReference type="RefSeq" id="WP_032450857.1">
    <property type="nucleotide sequence ID" value="NC_009505.1"/>
</dbReference>
<dbReference type="SMR" id="A5VMY2"/>
<dbReference type="GeneID" id="45123536"/>
<dbReference type="KEGG" id="bov:BOV_0032"/>
<dbReference type="HOGENOM" id="CLU_060739_1_1_5"/>
<dbReference type="PhylomeDB" id="A5VMY2"/>
<dbReference type="Proteomes" id="UP000006383">
    <property type="component" value="Chromosome I"/>
</dbReference>
<dbReference type="GO" id="GO:0003677">
    <property type="term" value="F:DNA binding"/>
    <property type="evidence" value="ECO:0007669"/>
    <property type="project" value="UniProtKB-UniRule"/>
</dbReference>
<dbReference type="GO" id="GO:0008270">
    <property type="term" value="F:zinc ion binding"/>
    <property type="evidence" value="ECO:0007669"/>
    <property type="project" value="UniProtKB-KW"/>
</dbReference>
<dbReference type="GO" id="GO:0006310">
    <property type="term" value="P:DNA recombination"/>
    <property type="evidence" value="ECO:0007669"/>
    <property type="project" value="UniProtKB-UniRule"/>
</dbReference>
<dbReference type="GO" id="GO:0006281">
    <property type="term" value="P:DNA repair"/>
    <property type="evidence" value="ECO:0007669"/>
    <property type="project" value="UniProtKB-UniRule"/>
</dbReference>
<dbReference type="CDD" id="cd01025">
    <property type="entry name" value="TOPRIM_recR"/>
    <property type="match status" value="1"/>
</dbReference>
<dbReference type="Gene3D" id="3.40.1360.10">
    <property type="match status" value="1"/>
</dbReference>
<dbReference type="Gene3D" id="6.10.250.240">
    <property type="match status" value="1"/>
</dbReference>
<dbReference type="Gene3D" id="1.10.8.420">
    <property type="entry name" value="RecR Domain 1"/>
    <property type="match status" value="1"/>
</dbReference>
<dbReference type="HAMAP" id="MF_00017">
    <property type="entry name" value="RecR"/>
    <property type="match status" value="1"/>
</dbReference>
<dbReference type="InterPro" id="IPR000093">
    <property type="entry name" value="DNA_Rcmb_RecR"/>
</dbReference>
<dbReference type="InterPro" id="IPR023627">
    <property type="entry name" value="Rcmb_RecR"/>
</dbReference>
<dbReference type="InterPro" id="IPR015967">
    <property type="entry name" value="Rcmb_RecR_Znf"/>
</dbReference>
<dbReference type="InterPro" id="IPR006171">
    <property type="entry name" value="TOPRIM_dom"/>
</dbReference>
<dbReference type="InterPro" id="IPR034137">
    <property type="entry name" value="TOPRIM_RecR"/>
</dbReference>
<dbReference type="NCBIfam" id="TIGR00615">
    <property type="entry name" value="recR"/>
    <property type="match status" value="1"/>
</dbReference>
<dbReference type="PANTHER" id="PTHR30446">
    <property type="entry name" value="RECOMBINATION PROTEIN RECR"/>
    <property type="match status" value="1"/>
</dbReference>
<dbReference type="PANTHER" id="PTHR30446:SF0">
    <property type="entry name" value="RECOMBINATION PROTEIN RECR"/>
    <property type="match status" value="1"/>
</dbReference>
<dbReference type="Pfam" id="PF21175">
    <property type="entry name" value="RecR_C"/>
    <property type="match status" value="1"/>
</dbReference>
<dbReference type="Pfam" id="PF21176">
    <property type="entry name" value="RecR_HhH"/>
    <property type="match status" value="1"/>
</dbReference>
<dbReference type="Pfam" id="PF02132">
    <property type="entry name" value="RecR_ZnF"/>
    <property type="match status" value="1"/>
</dbReference>
<dbReference type="Pfam" id="PF13662">
    <property type="entry name" value="Toprim_4"/>
    <property type="match status" value="1"/>
</dbReference>
<dbReference type="SMART" id="SM00493">
    <property type="entry name" value="TOPRIM"/>
    <property type="match status" value="1"/>
</dbReference>
<dbReference type="SUPFAM" id="SSF111304">
    <property type="entry name" value="Recombination protein RecR"/>
    <property type="match status" value="1"/>
</dbReference>
<dbReference type="PROSITE" id="PS50880">
    <property type="entry name" value="TOPRIM"/>
    <property type="match status" value="1"/>
</dbReference>
<protein>
    <recommendedName>
        <fullName evidence="1">Recombination protein RecR</fullName>
    </recommendedName>
</protein>
<sequence length="201" mass="21512">MSKRIAGPEIERLIQLLARVPGLGPRSARRAALHLIKKKEALLVPLGGAMQEAAEKVRICSCCGNVDTSDPCTICTDERRAPATLIVVEDVSDLWALERAGTMNVRYHVLGGRLSPLDGIGPDDLNIKGLVERVASGAIKEVILAVNATVEGQTTAHYITDQLSNFDVRVTRLAHGVPVGGELDYLDEGTLAAALRARTTL</sequence>
<name>RECR_BRUO2</name>
<comment type="function">
    <text evidence="1">May play a role in DNA repair. It seems to be involved in an RecBC-independent recombinational process of DNA repair. It may act with RecF and RecO.</text>
</comment>
<comment type="similarity">
    <text evidence="1">Belongs to the RecR family.</text>
</comment>
<comment type="sequence caution" evidence="2">
    <conflict type="erroneous initiation">
        <sequence resource="EMBL-CDS" id="ABQ61712"/>
    </conflict>
</comment>
<gene>
    <name evidence="1" type="primary">recR</name>
    <name type="ordered locus">BOV_0032</name>
</gene>
<organism>
    <name type="scientific">Brucella ovis (strain ATCC 25840 / 63/290 / NCTC 10512)</name>
    <dbReference type="NCBI Taxonomy" id="444178"/>
    <lineage>
        <taxon>Bacteria</taxon>
        <taxon>Pseudomonadati</taxon>
        <taxon>Pseudomonadota</taxon>
        <taxon>Alphaproteobacteria</taxon>
        <taxon>Hyphomicrobiales</taxon>
        <taxon>Brucellaceae</taxon>
        <taxon>Brucella/Ochrobactrum group</taxon>
        <taxon>Brucella</taxon>
    </lineage>
</organism>
<evidence type="ECO:0000255" key="1">
    <source>
        <dbReference type="HAMAP-Rule" id="MF_00017"/>
    </source>
</evidence>
<evidence type="ECO:0000305" key="2"/>